<protein>
    <recommendedName>
        <fullName evidence="1">Large-conductance mechanosensitive channel</fullName>
    </recommendedName>
</protein>
<feature type="chain" id="PRO_0000238016" description="Large-conductance mechanosensitive channel">
    <location>
        <begin position="1"/>
        <end position="161"/>
    </location>
</feature>
<feature type="transmembrane region" description="Helical" evidence="1">
    <location>
        <begin position="14"/>
        <end position="34"/>
    </location>
</feature>
<feature type="transmembrane region" description="Helical" evidence="1">
    <location>
        <begin position="85"/>
        <end position="105"/>
    </location>
</feature>
<proteinExistence type="inferred from homology"/>
<keyword id="KW-0997">Cell inner membrane</keyword>
<keyword id="KW-1003">Cell membrane</keyword>
<keyword id="KW-0407">Ion channel</keyword>
<keyword id="KW-0406">Ion transport</keyword>
<keyword id="KW-0472">Membrane</keyword>
<keyword id="KW-1185">Reference proteome</keyword>
<keyword id="KW-0812">Transmembrane</keyword>
<keyword id="KW-1133">Transmembrane helix</keyword>
<keyword id="KW-0813">Transport</keyword>
<accession>Q3B3W2</accession>
<organism>
    <name type="scientific">Chlorobium luteolum (strain DSM 273 / BCRC 81028 / 2530)</name>
    <name type="common">Pelodictyon luteolum</name>
    <dbReference type="NCBI Taxonomy" id="319225"/>
    <lineage>
        <taxon>Bacteria</taxon>
        <taxon>Pseudomonadati</taxon>
        <taxon>Chlorobiota</taxon>
        <taxon>Chlorobiia</taxon>
        <taxon>Chlorobiales</taxon>
        <taxon>Chlorobiaceae</taxon>
        <taxon>Chlorobium/Pelodictyon group</taxon>
        <taxon>Pelodictyon</taxon>
    </lineage>
</organism>
<gene>
    <name evidence="1" type="primary">mscL</name>
    <name type="ordered locus">Plut_1107</name>
</gene>
<dbReference type="EMBL" id="CP000096">
    <property type="protein sequence ID" value="ABB23969.1"/>
    <property type="molecule type" value="Genomic_DNA"/>
</dbReference>
<dbReference type="RefSeq" id="WP_011357841.1">
    <property type="nucleotide sequence ID" value="NC_007512.1"/>
</dbReference>
<dbReference type="STRING" id="319225.Plut_1107"/>
<dbReference type="KEGG" id="plt:Plut_1107"/>
<dbReference type="eggNOG" id="COG1970">
    <property type="taxonomic scope" value="Bacteria"/>
</dbReference>
<dbReference type="HOGENOM" id="CLU_095787_2_3_10"/>
<dbReference type="OrthoDB" id="9810350at2"/>
<dbReference type="Proteomes" id="UP000002709">
    <property type="component" value="Chromosome"/>
</dbReference>
<dbReference type="GO" id="GO:0005886">
    <property type="term" value="C:plasma membrane"/>
    <property type="evidence" value="ECO:0007669"/>
    <property type="project" value="UniProtKB-SubCell"/>
</dbReference>
<dbReference type="GO" id="GO:0008381">
    <property type="term" value="F:mechanosensitive monoatomic ion channel activity"/>
    <property type="evidence" value="ECO:0007669"/>
    <property type="project" value="UniProtKB-UniRule"/>
</dbReference>
<dbReference type="Gene3D" id="1.10.1200.120">
    <property type="entry name" value="Large-conductance mechanosensitive channel, MscL, domain 1"/>
    <property type="match status" value="1"/>
</dbReference>
<dbReference type="HAMAP" id="MF_00115">
    <property type="entry name" value="MscL"/>
    <property type="match status" value="1"/>
</dbReference>
<dbReference type="InterPro" id="IPR019823">
    <property type="entry name" value="Mechanosensitive_channel_CS"/>
</dbReference>
<dbReference type="InterPro" id="IPR001185">
    <property type="entry name" value="MS_channel"/>
</dbReference>
<dbReference type="InterPro" id="IPR037673">
    <property type="entry name" value="MSC/AndL"/>
</dbReference>
<dbReference type="InterPro" id="IPR036019">
    <property type="entry name" value="MscL_channel"/>
</dbReference>
<dbReference type="NCBIfam" id="TIGR00220">
    <property type="entry name" value="mscL"/>
    <property type="match status" value="1"/>
</dbReference>
<dbReference type="NCBIfam" id="NF001843">
    <property type="entry name" value="PRK00567.1-4"/>
    <property type="match status" value="1"/>
</dbReference>
<dbReference type="PANTHER" id="PTHR30266:SF2">
    <property type="entry name" value="LARGE-CONDUCTANCE MECHANOSENSITIVE CHANNEL"/>
    <property type="match status" value="1"/>
</dbReference>
<dbReference type="PANTHER" id="PTHR30266">
    <property type="entry name" value="MECHANOSENSITIVE CHANNEL MSCL"/>
    <property type="match status" value="1"/>
</dbReference>
<dbReference type="Pfam" id="PF01741">
    <property type="entry name" value="MscL"/>
    <property type="match status" value="1"/>
</dbReference>
<dbReference type="PRINTS" id="PR01264">
    <property type="entry name" value="MECHCHANNEL"/>
</dbReference>
<dbReference type="SUPFAM" id="SSF81330">
    <property type="entry name" value="Gated mechanosensitive channel"/>
    <property type="match status" value="1"/>
</dbReference>
<dbReference type="PROSITE" id="PS01327">
    <property type="entry name" value="MSCL"/>
    <property type="match status" value="1"/>
</dbReference>
<comment type="function">
    <text evidence="1">Channel that opens in response to stretch forces in the membrane lipid bilayer. May participate in the regulation of osmotic pressure changes within the cell.</text>
</comment>
<comment type="subunit">
    <text evidence="1">Homopentamer.</text>
</comment>
<comment type="subcellular location">
    <subcellularLocation>
        <location evidence="1">Cell inner membrane</location>
        <topology evidence="1">Multi-pass membrane protein</topology>
    </subcellularLocation>
</comment>
<comment type="similarity">
    <text evidence="1">Belongs to the MscL family.</text>
</comment>
<reference key="1">
    <citation type="submission" date="2005-08" db="EMBL/GenBank/DDBJ databases">
        <title>Complete sequence of Pelodictyon luteolum DSM 273.</title>
        <authorList>
            <consortium name="US DOE Joint Genome Institute"/>
            <person name="Copeland A."/>
            <person name="Lucas S."/>
            <person name="Lapidus A."/>
            <person name="Barry K."/>
            <person name="Detter J.C."/>
            <person name="Glavina T."/>
            <person name="Hammon N."/>
            <person name="Israni S."/>
            <person name="Pitluck S."/>
            <person name="Bryant D."/>
            <person name="Schmutz J."/>
            <person name="Larimer F."/>
            <person name="Land M."/>
            <person name="Kyrpides N."/>
            <person name="Ivanova N."/>
            <person name="Richardson P."/>
        </authorList>
    </citation>
    <scope>NUCLEOTIDE SEQUENCE [LARGE SCALE GENOMIC DNA]</scope>
    <source>
        <strain>DSM 273 / BCRC 81028 / 2530</strain>
    </source>
</reference>
<evidence type="ECO:0000255" key="1">
    <source>
        <dbReference type="HAMAP-Rule" id="MF_00115"/>
    </source>
</evidence>
<name>MSCL_CHLL3</name>
<sequence length="161" mass="16763">MLKEFKEFALKGNVVDMAVGIIVGGAFGSIVNTLVSEVMMPPLGLLTGGVDFSNLYVVMKEGVEPGPYAALANARAAGAVTLNYGLFLNALVSFTIMAFSVFILVKAINRLRQKADAAPAPPSKKTCPYCLTLVPQQASRCPACTSELPGAADPGARVAAK</sequence>